<gene>
    <name evidence="2" type="primary">nuoB</name>
    <name type="ordered locus">CBUD_0546</name>
</gene>
<sequence>MQQLLTKEGFLLTSLDDLMRWARSGSLWPMTFGLACCAVEMMQCASSRYDLDRFGAGLFRPSPRQSDVMIVAGTLCNKMAPALRKVYDQMAEPRWVISMGSCANGGGYYHYAYSVVRGCDRIVPVDVYVPGCPPTAEALFYGIMQLRNKIRYRNIFDRKDA</sequence>
<proteinExistence type="inferred from homology"/>
<name>NUOB_COXBN</name>
<comment type="function">
    <text evidence="1">NDH-1 shuttles electrons from NADH, via FMN and iron-sulfur (Fe-S) centers, to quinones in the respiratory chain. Couples the redox reaction to proton translocation (for every two electrons transferred, four hydrogen ions are translocated across the cytoplasmic membrane), and thus conserves the redox energy in a proton gradient (By similarity).</text>
</comment>
<comment type="catalytic activity">
    <reaction evidence="2">
        <text>a quinone + NADH + 5 H(+)(in) = a quinol + NAD(+) + 4 H(+)(out)</text>
        <dbReference type="Rhea" id="RHEA:57888"/>
        <dbReference type="ChEBI" id="CHEBI:15378"/>
        <dbReference type="ChEBI" id="CHEBI:24646"/>
        <dbReference type="ChEBI" id="CHEBI:57540"/>
        <dbReference type="ChEBI" id="CHEBI:57945"/>
        <dbReference type="ChEBI" id="CHEBI:132124"/>
    </reaction>
</comment>
<comment type="cofactor">
    <cofactor evidence="2">
        <name>[4Fe-4S] cluster</name>
        <dbReference type="ChEBI" id="CHEBI:49883"/>
    </cofactor>
    <text evidence="2">Binds 1 [4Fe-4S] cluster.</text>
</comment>
<comment type="subunit">
    <text evidence="2">NDH-1 is composed of 14 different subunits. Subunits NuoB, C, D, E, F, and G constitute the peripheral sector of the complex.</text>
</comment>
<comment type="subcellular location">
    <subcellularLocation>
        <location evidence="2">Cell inner membrane</location>
        <topology evidence="2">Peripheral membrane protein</topology>
        <orientation evidence="2">Cytoplasmic side</orientation>
    </subcellularLocation>
</comment>
<comment type="similarity">
    <text evidence="2">Belongs to the complex I 20 kDa subunit family.</text>
</comment>
<reference key="1">
    <citation type="journal article" date="2009" name="Infect. Immun.">
        <title>Comparative genomics reveal extensive transposon-mediated genomic plasticity and diversity among potential effector proteins within the genus Coxiella.</title>
        <authorList>
            <person name="Beare P.A."/>
            <person name="Unsworth N."/>
            <person name="Andoh M."/>
            <person name="Voth D.E."/>
            <person name="Omsland A."/>
            <person name="Gilk S.D."/>
            <person name="Williams K.P."/>
            <person name="Sobral B.W."/>
            <person name="Kupko J.J. III"/>
            <person name="Porcella S.F."/>
            <person name="Samuel J.E."/>
            <person name="Heinzen R.A."/>
        </authorList>
    </citation>
    <scope>NUCLEOTIDE SEQUENCE [LARGE SCALE GENOMIC DNA]</scope>
    <source>
        <strain>Dugway 5J108-111</strain>
    </source>
</reference>
<dbReference type="EC" id="7.1.1.-" evidence="2"/>
<dbReference type="EMBL" id="CP000733">
    <property type="protein sequence ID" value="ABS76854.1"/>
    <property type="molecule type" value="Genomic_DNA"/>
</dbReference>
<dbReference type="RefSeq" id="WP_005769074.1">
    <property type="nucleotide sequence ID" value="NC_009727.1"/>
</dbReference>
<dbReference type="SMR" id="A9KBK5"/>
<dbReference type="KEGG" id="cbd:CBUD_0546"/>
<dbReference type="HOGENOM" id="CLU_055737_7_3_6"/>
<dbReference type="Proteomes" id="UP000008555">
    <property type="component" value="Chromosome"/>
</dbReference>
<dbReference type="GO" id="GO:0005886">
    <property type="term" value="C:plasma membrane"/>
    <property type="evidence" value="ECO:0007669"/>
    <property type="project" value="UniProtKB-SubCell"/>
</dbReference>
<dbReference type="GO" id="GO:0045271">
    <property type="term" value="C:respiratory chain complex I"/>
    <property type="evidence" value="ECO:0007669"/>
    <property type="project" value="TreeGrafter"/>
</dbReference>
<dbReference type="GO" id="GO:0051539">
    <property type="term" value="F:4 iron, 4 sulfur cluster binding"/>
    <property type="evidence" value="ECO:0007669"/>
    <property type="project" value="UniProtKB-KW"/>
</dbReference>
<dbReference type="GO" id="GO:0005506">
    <property type="term" value="F:iron ion binding"/>
    <property type="evidence" value="ECO:0007669"/>
    <property type="project" value="UniProtKB-UniRule"/>
</dbReference>
<dbReference type="GO" id="GO:0008137">
    <property type="term" value="F:NADH dehydrogenase (ubiquinone) activity"/>
    <property type="evidence" value="ECO:0007669"/>
    <property type="project" value="InterPro"/>
</dbReference>
<dbReference type="GO" id="GO:0050136">
    <property type="term" value="F:NADH:ubiquinone reductase (non-electrogenic) activity"/>
    <property type="evidence" value="ECO:0007669"/>
    <property type="project" value="UniProtKB-UniRule"/>
</dbReference>
<dbReference type="GO" id="GO:0048038">
    <property type="term" value="F:quinone binding"/>
    <property type="evidence" value="ECO:0007669"/>
    <property type="project" value="UniProtKB-KW"/>
</dbReference>
<dbReference type="GO" id="GO:0009060">
    <property type="term" value="P:aerobic respiration"/>
    <property type="evidence" value="ECO:0007669"/>
    <property type="project" value="TreeGrafter"/>
</dbReference>
<dbReference type="GO" id="GO:0015990">
    <property type="term" value="P:electron transport coupled proton transport"/>
    <property type="evidence" value="ECO:0007669"/>
    <property type="project" value="TreeGrafter"/>
</dbReference>
<dbReference type="FunFam" id="3.40.50.12280:FF:000001">
    <property type="entry name" value="NADH-quinone oxidoreductase subunit B 2"/>
    <property type="match status" value="1"/>
</dbReference>
<dbReference type="Gene3D" id="3.40.50.12280">
    <property type="match status" value="1"/>
</dbReference>
<dbReference type="HAMAP" id="MF_01356">
    <property type="entry name" value="NDH1_NuoB"/>
    <property type="match status" value="1"/>
</dbReference>
<dbReference type="InterPro" id="IPR006137">
    <property type="entry name" value="NADH_UbQ_OxRdtase-like_20kDa"/>
</dbReference>
<dbReference type="InterPro" id="IPR006138">
    <property type="entry name" value="NADH_UQ_OxRdtase_20Kd_su"/>
</dbReference>
<dbReference type="NCBIfam" id="TIGR01957">
    <property type="entry name" value="nuoB_fam"/>
    <property type="match status" value="1"/>
</dbReference>
<dbReference type="NCBIfam" id="NF005012">
    <property type="entry name" value="PRK06411.1"/>
    <property type="match status" value="1"/>
</dbReference>
<dbReference type="PANTHER" id="PTHR11995">
    <property type="entry name" value="NADH DEHYDROGENASE"/>
    <property type="match status" value="1"/>
</dbReference>
<dbReference type="PANTHER" id="PTHR11995:SF14">
    <property type="entry name" value="NADH DEHYDROGENASE [UBIQUINONE] IRON-SULFUR PROTEIN 7, MITOCHONDRIAL"/>
    <property type="match status" value="1"/>
</dbReference>
<dbReference type="Pfam" id="PF01058">
    <property type="entry name" value="Oxidored_q6"/>
    <property type="match status" value="1"/>
</dbReference>
<dbReference type="SUPFAM" id="SSF56770">
    <property type="entry name" value="HydA/Nqo6-like"/>
    <property type="match status" value="1"/>
</dbReference>
<dbReference type="PROSITE" id="PS01150">
    <property type="entry name" value="COMPLEX1_20K"/>
    <property type="match status" value="1"/>
</dbReference>
<accession>A9KBK5</accession>
<keyword id="KW-0004">4Fe-4S</keyword>
<keyword id="KW-0997">Cell inner membrane</keyword>
<keyword id="KW-1003">Cell membrane</keyword>
<keyword id="KW-0408">Iron</keyword>
<keyword id="KW-0411">Iron-sulfur</keyword>
<keyword id="KW-0472">Membrane</keyword>
<keyword id="KW-0479">Metal-binding</keyword>
<keyword id="KW-0520">NAD</keyword>
<keyword id="KW-0874">Quinone</keyword>
<keyword id="KW-1278">Translocase</keyword>
<keyword id="KW-0813">Transport</keyword>
<keyword id="KW-0830">Ubiquinone</keyword>
<evidence type="ECO:0000250" key="1"/>
<evidence type="ECO:0000255" key="2">
    <source>
        <dbReference type="HAMAP-Rule" id="MF_01356"/>
    </source>
</evidence>
<feature type="chain" id="PRO_0000358396" description="NADH-quinone oxidoreductase subunit B">
    <location>
        <begin position="1"/>
        <end position="161"/>
    </location>
</feature>
<feature type="binding site" evidence="2">
    <location>
        <position position="36"/>
    </location>
    <ligand>
        <name>[4Fe-4S] cluster</name>
        <dbReference type="ChEBI" id="CHEBI:49883"/>
    </ligand>
</feature>
<feature type="binding site" evidence="2">
    <location>
        <position position="37"/>
    </location>
    <ligand>
        <name>[4Fe-4S] cluster</name>
        <dbReference type="ChEBI" id="CHEBI:49883"/>
    </ligand>
</feature>
<feature type="binding site" evidence="2">
    <location>
        <position position="102"/>
    </location>
    <ligand>
        <name>[4Fe-4S] cluster</name>
        <dbReference type="ChEBI" id="CHEBI:49883"/>
    </ligand>
</feature>
<feature type="binding site" evidence="2">
    <location>
        <position position="132"/>
    </location>
    <ligand>
        <name>[4Fe-4S] cluster</name>
        <dbReference type="ChEBI" id="CHEBI:49883"/>
    </ligand>
</feature>
<organism>
    <name type="scientific">Coxiella burnetii (strain Dugway 5J108-111)</name>
    <dbReference type="NCBI Taxonomy" id="434922"/>
    <lineage>
        <taxon>Bacteria</taxon>
        <taxon>Pseudomonadati</taxon>
        <taxon>Pseudomonadota</taxon>
        <taxon>Gammaproteobacteria</taxon>
        <taxon>Legionellales</taxon>
        <taxon>Coxiellaceae</taxon>
        <taxon>Coxiella</taxon>
    </lineage>
</organism>
<protein>
    <recommendedName>
        <fullName evidence="2">NADH-quinone oxidoreductase subunit B</fullName>
        <ecNumber evidence="2">7.1.1.-</ecNumber>
    </recommendedName>
    <alternativeName>
        <fullName evidence="2">NADH dehydrogenase I subunit B</fullName>
    </alternativeName>
    <alternativeName>
        <fullName evidence="2">NDH-1 subunit B</fullName>
    </alternativeName>
</protein>